<feature type="chain" id="PRO_0000222848" description="Matrix protein">
    <location>
        <begin position="1"/>
        <end position="202"/>
    </location>
</feature>
<feature type="region of interest" description="Essential for glycoprotein binding" evidence="1">
    <location>
        <begin position="115"/>
        <end position="151"/>
    </location>
</feature>
<feature type="short sequence motif" description="PPXY motif" evidence="4">
    <location>
        <begin position="35"/>
        <end position="38"/>
    </location>
</feature>
<feature type="site" description="Involved in the inhibition of stress granules formation and contributes therefore to virulence" evidence="3">
    <location>
        <position position="95"/>
    </location>
</feature>
<comment type="function">
    <text evidence="2 3">Plays a major role in assembly, budding and uncoating of virion after membrane fusion. Completely covers the ribonucleoprotein coil and keep it in condensed bullet-shaped form. Inhibits viral transcription and stimulates replication. Plays a major role in early induction of TRAIL-mediated apoptosis in infected neurons (By similarity). Inhibits the integrated stress response (ISR) in the infected cell by blocking the formation of stress granules (By similarity).</text>
</comment>
<comment type="subunit">
    <text evidence="2">Homomultimer. Interacts with nucleoprotein and with the cytoplasmic domain of glycoprotein. Interacts with host ATP6V1A; this interaction plays an important role in virion uncoating after viral entry.</text>
</comment>
<comment type="interaction">
    <interactant intactId="EBI-25567776">
        <id>P0DOF2</id>
    </interactant>
    <interactant intactId="EBI-1054757">
        <id>P38606</id>
        <label>ATP6V1A</label>
    </interactant>
    <organismsDiffer>true</organismsDiffer>
    <experiments>10</experiments>
</comment>
<comment type="interaction">
    <interactant intactId="EBI-25567776">
        <id>P0DOF2</id>
    </interactant>
    <interactant intactId="EBI-924464">
        <id>Q96QZ7</id>
        <label>MAGI1</label>
    </interactant>
    <organismsDiffer>true</organismsDiffer>
    <experiments>2</experiments>
</comment>
<comment type="subcellular location">
    <subcellularLocation>
        <location evidence="2">Virion membrane</location>
        <topology evidence="2">Peripheral membrane protein</topology>
    </subcellularLocation>
    <subcellularLocation>
        <location evidence="2">Host endomembrane system</location>
        <topology evidence="2">Peripheral membrane protein</topology>
    </subcellularLocation>
    <subcellularLocation>
        <location evidence="2">Host cytoplasm</location>
    </subcellularLocation>
</comment>
<comment type="domain">
    <text evidence="5">Late-budding domains (L domains) are short sequence motifs essential for viral particle budding. They recruit proteins of the host ESCRT machinery (Endosomal Sorting Complex Required for Transport) or ESCRT-associated proteins. Matrix protein contains one L domain: a PPXY motif which potentially interacts with the WW domain 3 of NEDD4 E3 ubiquitin ligase (Potential).</text>
</comment>
<comment type="miscellaneous">
    <text evidence="1">Most abundant protein in the virion.</text>
</comment>
<comment type="similarity">
    <text evidence="5">Belongs to the lyssavirus matrix protein family.</text>
</comment>
<proteinExistence type="evidence at protein level"/>
<sequence>MNFLRKIVKNCRDEDTQKPSPVSAPLDDDDLWLPPPEYVPLKELTSKKNMRNFCINGGVKVCSPNGYSFRILRHILKSFDEIYSGNHRMIGLVKVVIGLALSGSPVPEGMNWVYKLRRTFIFQWADSRGPLEGEELEYSQEITWDDDTEFVGLQIRVIAKQCHIQGRIWCINMNPRACQLWSDMSLQTQRSEEDKDSSLLLE</sequence>
<reference key="1">
    <citation type="journal article" date="1986" name="Virus Res.">
        <title>Cloning of rabies virus matrix protein mRNA and determination of its amino acid sequence.</title>
        <authorList>
            <person name="Rayssiguier C."/>
            <person name="Cioe L."/>
            <person name="Withers E."/>
            <person name="Wunner W.H."/>
            <person name="Curtis P.J."/>
        </authorList>
    </citation>
    <scope>NUCLEOTIDE SEQUENCE [GENOMIC RNA]</scope>
</reference>
<reference key="2">
    <citation type="submission" date="2007-01" db="EMBL/GenBank/DDBJ databases">
        <title>Complete nucleotide sequencing of SAD derivatives of attenuated rabies virus vaccine strains.</title>
        <authorList>
            <person name="Geue L."/>
            <person name="Schares S."/>
            <person name="Schnick C."/>
            <person name="Kliemt J."/>
            <person name="Beckert A."/>
            <person name="Hoffmann B."/>
            <person name="Freuling C."/>
            <person name="Marston D."/>
            <person name="McElhinney L."/>
            <person name="Fooks A."/>
            <person name="Zanoni R."/>
            <person name="Peterhans E."/>
            <person name="Cox J."/>
            <person name="Mueller T."/>
        </authorList>
    </citation>
    <scope>NUCLEOTIDE SEQUENCE [GENOMIC RNA]</scope>
    <source>
        <strain>ERA</strain>
    </source>
</reference>
<gene>
    <name type="primary">M</name>
</gene>
<keyword id="KW-1035">Host cytoplasm</keyword>
<keyword id="KW-1043">Host membrane</keyword>
<keyword id="KW-0945">Host-virus interaction</keyword>
<keyword id="KW-0472">Membrane</keyword>
<keyword id="KW-0597">Phosphoprotein</keyword>
<keyword id="KW-1198">Viral budding</keyword>
<keyword id="KW-1187">Viral budding via the host ESCRT complexes</keyword>
<keyword id="KW-0261">Viral envelope protein</keyword>
<keyword id="KW-0468">Viral matrix protein</keyword>
<keyword id="KW-1188">Viral release from host cell</keyword>
<keyword id="KW-0946">Virion</keyword>
<organism>
    <name type="scientific">Rabies virus (strain ERA)</name>
    <name type="common">RABV</name>
    <dbReference type="NCBI Taxonomy" id="11295"/>
    <lineage>
        <taxon>Viruses</taxon>
        <taxon>Riboviria</taxon>
        <taxon>Orthornavirae</taxon>
        <taxon>Negarnaviricota</taxon>
        <taxon>Haploviricotina</taxon>
        <taxon>Monjiviricetes</taxon>
        <taxon>Mononegavirales</taxon>
        <taxon>Rhabdoviridae</taxon>
        <taxon>Alpharhabdovirinae</taxon>
        <taxon>Lyssavirus</taxon>
        <taxon>Lyssavirus rabies</taxon>
    </lineage>
</organism>
<accession>P0DOF2</accession>
<accession>A3F5L7</accession>
<accession>A3F5T2</accession>
<accession>P13616</accession>
<protein>
    <recommendedName>
        <fullName>Matrix protein</fullName>
    </recommendedName>
    <alternativeName>
        <fullName>Phosphoprotein M2</fullName>
    </alternativeName>
</protein>
<dbReference type="EMBL" id="M22013">
    <property type="protein sequence ID" value="AAA47214.1"/>
    <property type="molecule type" value="Genomic_RNA"/>
</dbReference>
<dbReference type="EMBL" id="EF206707">
    <property type="protein sequence ID" value="ABN11293.1"/>
    <property type="molecule type" value="Genomic_RNA"/>
</dbReference>
<dbReference type="SMR" id="P0DOF2"/>
<dbReference type="IntAct" id="P0DOF2">
    <property type="interactions" value="2574"/>
</dbReference>
<dbReference type="Proteomes" id="UP000008619">
    <property type="component" value="Genome"/>
</dbReference>
<dbReference type="GO" id="GO:0030430">
    <property type="term" value="C:host cell cytoplasm"/>
    <property type="evidence" value="ECO:0007669"/>
    <property type="project" value="UniProtKB-SubCell"/>
</dbReference>
<dbReference type="GO" id="GO:0033645">
    <property type="term" value="C:host cell endomembrane system"/>
    <property type="evidence" value="ECO:0007669"/>
    <property type="project" value="UniProtKB-SubCell"/>
</dbReference>
<dbReference type="GO" id="GO:0016020">
    <property type="term" value="C:membrane"/>
    <property type="evidence" value="ECO:0007669"/>
    <property type="project" value="UniProtKB-KW"/>
</dbReference>
<dbReference type="GO" id="GO:0019031">
    <property type="term" value="C:viral envelope"/>
    <property type="evidence" value="ECO:0007669"/>
    <property type="project" value="UniProtKB-KW"/>
</dbReference>
<dbReference type="GO" id="GO:0055036">
    <property type="term" value="C:virion membrane"/>
    <property type="evidence" value="ECO:0007669"/>
    <property type="project" value="UniProtKB-SubCell"/>
</dbReference>
<dbReference type="GO" id="GO:0039660">
    <property type="term" value="F:structural constituent of virion"/>
    <property type="evidence" value="ECO:0007669"/>
    <property type="project" value="UniProtKB-KW"/>
</dbReference>
<dbReference type="GO" id="GO:0039702">
    <property type="term" value="P:viral budding via host ESCRT complex"/>
    <property type="evidence" value="ECO:0007669"/>
    <property type="project" value="UniProtKB-KW"/>
</dbReference>
<dbReference type="FunFam" id="3.10.460.20:FF:000001">
    <property type="entry name" value="Matrix protein"/>
    <property type="match status" value="1"/>
</dbReference>
<dbReference type="Gene3D" id="3.10.460.20">
    <property type="entry name" value="Rhabdovirus matrix protein M2"/>
    <property type="match status" value="1"/>
</dbReference>
<dbReference type="InterPro" id="IPR006870">
    <property type="entry name" value="Rhabdo_M"/>
</dbReference>
<dbReference type="InterPro" id="IPR038617">
    <property type="entry name" value="Rhabdovirus_M_sf"/>
</dbReference>
<dbReference type="Pfam" id="PF04785">
    <property type="entry name" value="Rhabdo_M2"/>
    <property type="match status" value="1"/>
</dbReference>
<evidence type="ECO:0000250" key="1"/>
<evidence type="ECO:0000250" key="2">
    <source>
        <dbReference type="UniProtKB" id="P16287"/>
    </source>
</evidence>
<evidence type="ECO:0000250" key="3">
    <source>
        <dbReference type="UniProtKB" id="P25224"/>
    </source>
</evidence>
<evidence type="ECO:0000255" key="4"/>
<evidence type="ECO:0000305" key="5"/>
<organismHost>
    <name type="scientific">Homo sapiens</name>
    <name type="common">Human</name>
    <dbReference type="NCBI Taxonomy" id="9606"/>
</organismHost>
<organismHost>
    <name type="scientific">Mammalia</name>
    <dbReference type="NCBI Taxonomy" id="40674"/>
</organismHost>
<name>MATRX_RABVE</name>